<keyword id="KW-0472">Membrane</keyword>
<keyword id="KW-1185">Reference proteome</keyword>
<keyword id="KW-0762">Sugar transport</keyword>
<keyword id="KW-0769">Symport</keyword>
<keyword id="KW-0812">Transmembrane</keyword>
<keyword id="KW-1133">Transmembrane helix</keyword>
<keyword id="KW-0813">Transport</keyword>
<feature type="chain" id="PRO_0000259869" description="Putative polyol transporter 1">
    <location>
        <begin position="1"/>
        <end position="511"/>
    </location>
</feature>
<feature type="transmembrane region" description="Helical; Name=1" evidence="2">
    <location>
        <begin position="27"/>
        <end position="47"/>
    </location>
</feature>
<feature type="transmembrane region" description="Helical; Name=2" evidence="2">
    <location>
        <begin position="63"/>
        <end position="83"/>
    </location>
</feature>
<feature type="transmembrane region" description="Helical; Name=3" evidence="2">
    <location>
        <begin position="94"/>
        <end position="114"/>
    </location>
</feature>
<feature type="transmembrane region" description="Helical; Name=4" evidence="2">
    <location>
        <begin position="124"/>
        <end position="144"/>
    </location>
</feature>
<feature type="transmembrane region" description="Helical; Name=5" evidence="2">
    <location>
        <begin position="151"/>
        <end position="171"/>
    </location>
</feature>
<feature type="transmembrane region" description="Helical; Name=6" evidence="2">
    <location>
        <begin position="186"/>
        <end position="206"/>
    </location>
</feature>
<feature type="transmembrane region" description="Helical; Name=7" evidence="2">
    <location>
        <begin position="284"/>
        <end position="304"/>
    </location>
</feature>
<feature type="transmembrane region" description="Helical; Name=8" evidence="2">
    <location>
        <begin position="324"/>
        <end position="344"/>
    </location>
</feature>
<feature type="transmembrane region" description="Helical; Name=9" evidence="2">
    <location>
        <begin position="351"/>
        <end position="371"/>
    </location>
</feature>
<feature type="transmembrane region" description="Helical; Name=10" evidence="2">
    <location>
        <begin position="384"/>
        <end position="404"/>
    </location>
</feature>
<feature type="transmembrane region" description="Helical; Name=11" evidence="2">
    <location>
        <begin position="424"/>
        <end position="444"/>
    </location>
</feature>
<feature type="transmembrane region" description="Helical; Name=12" evidence="2">
    <location>
        <begin position="454"/>
        <end position="474"/>
    </location>
</feature>
<evidence type="ECO:0000250" key="1"/>
<evidence type="ECO:0000255" key="2"/>
<evidence type="ECO:0000305" key="3"/>
<comment type="function">
    <text evidence="1">Plasma membrane sugar-proton symporter.</text>
</comment>
<comment type="subcellular location">
    <subcellularLocation>
        <location evidence="1">Membrane</location>
        <topology evidence="1">Multi-pass membrane protein</topology>
    </subcellularLocation>
</comment>
<comment type="similarity">
    <text evidence="3">Belongs to the major facilitator superfamily. Sugar transporter (TC 2.A.1.1) family.</text>
</comment>
<proteinExistence type="inferred from homology"/>
<protein>
    <recommendedName>
        <fullName>Putative polyol transporter 1</fullName>
    </recommendedName>
</protein>
<dbReference type="EMBL" id="AC007134">
    <property type="protein sequence ID" value="AAD26954.1"/>
    <property type="molecule type" value="Genomic_DNA"/>
</dbReference>
<dbReference type="EMBL" id="CP002685">
    <property type="protein sequence ID" value="AEC06467.1"/>
    <property type="molecule type" value="Genomic_DNA"/>
</dbReference>
<dbReference type="PIR" id="H84536">
    <property type="entry name" value="H84536"/>
</dbReference>
<dbReference type="SMR" id="Q9XIH7"/>
<dbReference type="STRING" id="3702.Q9XIH7"/>
<dbReference type="TCDB" id="2.A.1.1.75">
    <property type="family name" value="the major facilitator superfamily (mfs)"/>
</dbReference>
<dbReference type="GlyGen" id="Q9XIH7">
    <property type="glycosylation" value="1 site"/>
</dbReference>
<dbReference type="iPTMnet" id="Q9XIH7"/>
<dbReference type="PaxDb" id="3702-AT2G16120.1"/>
<dbReference type="ProteomicsDB" id="235043"/>
<dbReference type="EnsemblPlants" id="AT2G16120.1">
    <property type="protein sequence ID" value="AT2G16120.1"/>
    <property type="gene ID" value="AT2G16120"/>
</dbReference>
<dbReference type="GeneID" id="816109"/>
<dbReference type="Gramene" id="AT2G16120.1">
    <property type="protein sequence ID" value="AT2G16120.1"/>
    <property type="gene ID" value="AT2G16120"/>
</dbReference>
<dbReference type="KEGG" id="ath:AT2G16120"/>
<dbReference type="Araport" id="AT2G16120"/>
<dbReference type="TAIR" id="AT2G16120">
    <property type="gene designation" value="PMT1"/>
</dbReference>
<dbReference type="eggNOG" id="KOG0254">
    <property type="taxonomic scope" value="Eukaryota"/>
</dbReference>
<dbReference type="HOGENOM" id="CLU_001265_30_5_1"/>
<dbReference type="InParanoid" id="Q9XIH7"/>
<dbReference type="OMA" id="KWAMYLF"/>
<dbReference type="PhylomeDB" id="Q9XIH7"/>
<dbReference type="PRO" id="PR:Q9XIH7"/>
<dbReference type="Proteomes" id="UP000006548">
    <property type="component" value="Chromosome 2"/>
</dbReference>
<dbReference type="ExpressionAtlas" id="Q9XIH7">
    <property type="expression patterns" value="baseline"/>
</dbReference>
<dbReference type="GO" id="GO:0005886">
    <property type="term" value="C:plasma membrane"/>
    <property type="evidence" value="ECO:0000314"/>
    <property type="project" value="TAIR"/>
</dbReference>
<dbReference type="GO" id="GO:0090406">
    <property type="term" value="C:pollen tube"/>
    <property type="evidence" value="ECO:0000314"/>
    <property type="project" value="TAIR"/>
</dbReference>
<dbReference type="GO" id="GO:0005351">
    <property type="term" value="F:carbohydrate:proton symporter activity"/>
    <property type="evidence" value="ECO:0007669"/>
    <property type="project" value="InterPro"/>
</dbReference>
<dbReference type="CDD" id="cd17437">
    <property type="entry name" value="MFS_PLT"/>
    <property type="match status" value="1"/>
</dbReference>
<dbReference type="FunFam" id="1.20.1250.20:FF:000025">
    <property type="entry name" value="probable polyol transporter 4"/>
    <property type="match status" value="1"/>
</dbReference>
<dbReference type="Gene3D" id="1.20.1250.20">
    <property type="entry name" value="MFS general substrate transporter like domains"/>
    <property type="match status" value="1"/>
</dbReference>
<dbReference type="InterPro" id="IPR020846">
    <property type="entry name" value="MFS_dom"/>
</dbReference>
<dbReference type="InterPro" id="IPR005828">
    <property type="entry name" value="MFS_sugar_transport-like"/>
</dbReference>
<dbReference type="InterPro" id="IPR036259">
    <property type="entry name" value="MFS_trans_sf"/>
</dbReference>
<dbReference type="InterPro" id="IPR044776">
    <property type="entry name" value="PLT1-6"/>
</dbReference>
<dbReference type="InterPro" id="IPR045262">
    <property type="entry name" value="STP/PLT_plant"/>
</dbReference>
<dbReference type="InterPro" id="IPR003663">
    <property type="entry name" value="Sugar/inositol_transpt"/>
</dbReference>
<dbReference type="InterPro" id="IPR005829">
    <property type="entry name" value="Sugar_transporter_CS"/>
</dbReference>
<dbReference type="NCBIfam" id="TIGR00879">
    <property type="entry name" value="SP"/>
    <property type="match status" value="1"/>
</dbReference>
<dbReference type="PANTHER" id="PTHR23500:SF487">
    <property type="entry name" value="POLYOL TRANSPORTER 1-RELATED"/>
    <property type="match status" value="1"/>
</dbReference>
<dbReference type="PANTHER" id="PTHR23500">
    <property type="entry name" value="SOLUTE CARRIER FAMILY 2, FACILITATED GLUCOSE TRANSPORTER"/>
    <property type="match status" value="1"/>
</dbReference>
<dbReference type="Pfam" id="PF00083">
    <property type="entry name" value="Sugar_tr"/>
    <property type="match status" value="1"/>
</dbReference>
<dbReference type="PRINTS" id="PR00171">
    <property type="entry name" value="SUGRTRNSPORT"/>
</dbReference>
<dbReference type="SUPFAM" id="SSF103473">
    <property type="entry name" value="MFS general substrate transporter"/>
    <property type="match status" value="1"/>
</dbReference>
<dbReference type="PROSITE" id="PS50850">
    <property type="entry name" value="MFS"/>
    <property type="match status" value="1"/>
</dbReference>
<dbReference type="PROSITE" id="PS00216">
    <property type="entry name" value="SUGAR_TRANSPORT_1"/>
    <property type="match status" value="1"/>
</dbReference>
<dbReference type="PROSITE" id="PS00217">
    <property type="entry name" value="SUGAR_TRANSPORT_2"/>
    <property type="match status" value="1"/>
</dbReference>
<gene>
    <name type="primary">PLT1</name>
    <name type="ordered locus">At2g16120</name>
    <name type="ORF">F7H1.14</name>
</gene>
<organism>
    <name type="scientific">Arabidopsis thaliana</name>
    <name type="common">Mouse-ear cress</name>
    <dbReference type="NCBI Taxonomy" id="3702"/>
    <lineage>
        <taxon>Eukaryota</taxon>
        <taxon>Viridiplantae</taxon>
        <taxon>Streptophyta</taxon>
        <taxon>Embryophyta</taxon>
        <taxon>Tracheophyta</taxon>
        <taxon>Spermatophyta</taxon>
        <taxon>Magnoliopsida</taxon>
        <taxon>eudicotyledons</taxon>
        <taxon>Gunneridae</taxon>
        <taxon>Pentapetalae</taxon>
        <taxon>rosids</taxon>
        <taxon>malvids</taxon>
        <taxon>Brassicales</taxon>
        <taxon>Brassicaceae</taxon>
        <taxon>Camelineae</taxon>
        <taxon>Arabidopsis</taxon>
    </lineage>
</organism>
<name>PLT1_ARATH</name>
<reference key="1">
    <citation type="journal article" date="1999" name="Nature">
        <title>Sequence and analysis of chromosome 2 of the plant Arabidopsis thaliana.</title>
        <authorList>
            <person name="Lin X."/>
            <person name="Kaul S."/>
            <person name="Rounsley S.D."/>
            <person name="Shea T.P."/>
            <person name="Benito M.-I."/>
            <person name="Town C.D."/>
            <person name="Fujii C.Y."/>
            <person name="Mason T.M."/>
            <person name="Bowman C.L."/>
            <person name="Barnstead M.E."/>
            <person name="Feldblyum T.V."/>
            <person name="Buell C.R."/>
            <person name="Ketchum K.A."/>
            <person name="Lee J.J."/>
            <person name="Ronning C.M."/>
            <person name="Koo H.L."/>
            <person name="Moffat K.S."/>
            <person name="Cronin L.A."/>
            <person name="Shen M."/>
            <person name="Pai G."/>
            <person name="Van Aken S."/>
            <person name="Umayam L."/>
            <person name="Tallon L.J."/>
            <person name="Gill J.E."/>
            <person name="Adams M.D."/>
            <person name="Carrera A.J."/>
            <person name="Creasy T.H."/>
            <person name="Goodman H.M."/>
            <person name="Somerville C.R."/>
            <person name="Copenhaver G.P."/>
            <person name="Preuss D."/>
            <person name="Nierman W.C."/>
            <person name="White O."/>
            <person name="Eisen J.A."/>
            <person name="Salzberg S.L."/>
            <person name="Fraser C.M."/>
            <person name="Venter J.C."/>
        </authorList>
    </citation>
    <scope>NUCLEOTIDE SEQUENCE [LARGE SCALE GENOMIC DNA]</scope>
    <source>
        <strain>cv. Columbia</strain>
    </source>
</reference>
<reference key="2">
    <citation type="journal article" date="2017" name="Plant J.">
        <title>Araport11: a complete reannotation of the Arabidopsis thaliana reference genome.</title>
        <authorList>
            <person name="Cheng C.Y."/>
            <person name="Krishnakumar V."/>
            <person name="Chan A.P."/>
            <person name="Thibaud-Nissen F."/>
            <person name="Schobel S."/>
            <person name="Town C.D."/>
        </authorList>
    </citation>
    <scope>GENOME REANNOTATION</scope>
    <source>
        <strain>cv. Columbia</strain>
    </source>
</reference>
<reference key="3">
    <citation type="journal article" date="2006" name="BMC Evol. Biol.">
        <title>The monosaccharide transporter gene family in land plants is ancient and shows differential subfamily expression and expansion across lineages.</title>
        <authorList>
            <person name="Johnson D.A."/>
            <person name="Hill J.P."/>
            <person name="Thomas M.A."/>
        </authorList>
    </citation>
    <scope>GENE FAMILY</scope>
</reference>
<accession>Q9XIH7</accession>
<sequence length="511" mass="54758">MNSSGVEQGVVIAESEPPRGNRSRYAFACAILASMTSIILGYDIGVMSGASIFIKDDLKLSDVQLEILMGILNIYSLVGSGAAGRTSDWLGRRYTIVLAGAFFFCGALLMGFATNYPFIMVGRFVAGIGVGYAMMIAPVYTAEVAPASSRGFLTSFPEIFINIGILLGYVSNYFFSKLPEHLGWRFMLGVGAVPSVFLAIGVLAMPESPRWLVLQGRLGDAFKVLDKTSNTKEEAISRLDDIKRAVGIPDDMTDDVIVVPNKKSAGKGVWKDLLVRPTPSVRHILIACLGIHFAQQASGIDAVVLYSPTIFSKAGLKSKNDQLLATVAVGVVKTLFIVVGTCVVDRFGRRALLLTSMGGMFLSLTALGTSLTVINRNPGQTLKWAIGLAVTTVMTFVATFSIGAGPVTWVYCSEIFPVRLRAQGASLGVMLNRLMSGIIGMTFLSLSKGLTIGGAFLLFAGVAAAAWVFFFTFLPETRGIPLEEMETLFGSYTANKKNNSMSKDNEVVDGQ</sequence>